<proteinExistence type="evidence at transcript level"/>
<feature type="transit peptide" description="Chloroplast" evidence="1">
    <location>
        <begin position="1" status="less than"/>
        <end position="27"/>
    </location>
</feature>
<feature type="chain" id="PRO_0000029358" description="Photosystem I reaction center subunit N, chloroplastic">
    <location>
        <begin position="28"/>
        <end position="112"/>
    </location>
</feature>
<feature type="non-terminal residue">
    <location>
        <position position="1"/>
    </location>
</feature>
<organism>
    <name type="scientific">Zea mays</name>
    <name type="common">Maize</name>
    <dbReference type="NCBI Taxonomy" id="4577"/>
    <lineage>
        <taxon>Eukaryota</taxon>
        <taxon>Viridiplantae</taxon>
        <taxon>Streptophyta</taxon>
        <taxon>Embryophyta</taxon>
        <taxon>Tracheophyta</taxon>
        <taxon>Spermatophyta</taxon>
        <taxon>Magnoliopsida</taxon>
        <taxon>Liliopsida</taxon>
        <taxon>Poales</taxon>
        <taxon>Poaceae</taxon>
        <taxon>PACMAD clade</taxon>
        <taxon>Panicoideae</taxon>
        <taxon>Andropogonodae</taxon>
        <taxon>Andropogoneae</taxon>
        <taxon>Tripsacinae</taxon>
        <taxon>Zea</taxon>
    </lineage>
</organism>
<name>PSAN_MAIZE</name>
<comment type="function">
    <text>May function in mediating the binding of the antenna complexes to the PSI reaction center and core antenna.</text>
</comment>
<comment type="subcellular location">
    <subcellularLocation>
        <location>Plastid</location>
        <location>Chloroplast thylakoid membrane</location>
        <topology>Peripheral membrane protein</topology>
        <orientation>Lumenal side</orientation>
    </subcellularLocation>
</comment>
<comment type="similarity">
    <text evidence="2">Belongs to the psaN family.</text>
</comment>
<dbReference type="EMBL" id="AF052429">
    <property type="protein sequence ID" value="AAC26197.1"/>
    <property type="molecule type" value="mRNA"/>
</dbReference>
<dbReference type="PIR" id="T01577">
    <property type="entry name" value="T01577"/>
</dbReference>
<dbReference type="SMR" id="O65107"/>
<dbReference type="STRING" id="4577.O65107"/>
<dbReference type="PaxDb" id="4577-GRMZM2G080107_P01"/>
<dbReference type="eggNOG" id="ENOG502QSZI">
    <property type="taxonomic scope" value="Eukaryota"/>
</dbReference>
<dbReference type="InParanoid" id="O65107"/>
<dbReference type="Proteomes" id="UP000007305">
    <property type="component" value="Unplaced"/>
</dbReference>
<dbReference type="ExpressionAtlas" id="O65107">
    <property type="expression patterns" value="baseline and differential"/>
</dbReference>
<dbReference type="GO" id="GO:0030093">
    <property type="term" value="C:chloroplast photosystem I"/>
    <property type="evidence" value="ECO:0000318"/>
    <property type="project" value="GO_Central"/>
</dbReference>
<dbReference type="GO" id="GO:0015979">
    <property type="term" value="P:photosynthesis"/>
    <property type="evidence" value="ECO:0007669"/>
    <property type="project" value="UniProtKB-KW"/>
</dbReference>
<dbReference type="FunFam" id="4.10.1190.10:FF:000001">
    <property type="entry name" value="Photosystem I reaction center subunit N"/>
    <property type="match status" value="1"/>
</dbReference>
<dbReference type="Gene3D" id="4.10.1190.10">
    <property type="entry name" value="Chlorophyll A-B binding protein"/>
    <property type="match status" value="1"/>
</dbReference>
<dbReference type="InterPro" id="IPR008796">
    <property type="entry name" value="PSAN"/>
</dbReference>
<dbReference type="InterPro" id="IPR044907">
    <property type="entry name" value="PSAN_sf"/>
</dbReference>
<dbReference type="PANTHER" id="PTHR36814">
    <property type="entry name" value="PHOTOSYSTEM I REACTION CENTER SUBUNIT N, CHLOROPLASTIC"/>
    <property type="match status" value="1"/>
</dbReference>
<dbReference type="PANTHER" id="PTHR36814:SF1">
    <property type="entry name" value="PHOTOSYSTEM I REACTION CENTER SUBUNIT N, CHLOROPLASTIC"/>
    <property type="match status" value="1"/>
</dbReference>
<dbReference type="Pfam" id="PF05479">
    <property type="entry name" value="PsaN"/>
    <property type="match status" value="1"/>
</dbReference>
<gene>
    <name type="primary">PSAN</name>
</gene>
<evidence type="ECO:0000255" key="1"/>
<evidence type="ECO:0000305" key="2"/>
<accession>O65107</accession>
<keyword id="KW-0150">Chloroplast</keyword>
<keyword id="KW-0472">Membrane</keyword>
<keyword id="KW-0602">Photosynthesis</keyword>
<keyword id="KW-0603">Photosystem I</keyword>
<keyword id="KW-0934">Plastid</keyword>
<keyword id="KW-1185">Reference proteome</keyword>
<keyword id="KW-0793">Thylakoid</keyword>
<keyword id="KW-0809">Transit peptide</keyword>
<protein>
    <recommendedName>
        <fullName>Photosystem I reaction center subunit N, chloroplastic</fullName>
        <shortName>PSI-N</shortName>
    </recommendedName>
</protein>
<sequence length="112" mass="12621">AMRNAIEGMNGKELDGRNITTTGSAKATIFDEYLEKSKANKELNDKKRLATSGANFARAYTVEFGSCQFPYNFTGCQDLAKQKKVPFISDDLEIECEGKEKFKCGSNVFWKW</sequence>
<reference key="1">
    <citation type="online journal article" date="1998" name="Plant Gene Register">
        <title>Nucleotide sequence of cDNAs encoding the psaH and psaN subunits of the maize photosystem I complex.</title>
        <authorList>
            <person name="Heck D.A."/>
            <person name="Chitnis P.R."/>
        </authorList>
        <locator>PGR98-107</locator>
    </citation>
    <scope>NUCLEOTIDE SEQUENCE [MRNA]</scope>
    <source>
        <strain>cv. B73</strain>
    </source>
</reference>